<proteinExistence type="inferred from homology"/>
<organism>
    <name type="scientific">Nitratidesulfovibrio vulgaris (strain DP4)</name>
    <name type="common">Desulfovibrio vulgaris</name>
    <dbReference type="NCBI Taxonomy" id="391774"/>
    <lineage>
        <taxon>Bacteria</taxon>
        <taxon>Pseudomonadati</taxon>
        <taxon>Thermodesulfobacteriota</taxon>
        <taxon>Desulfovibrionia</taxon>
        <taxon>Desulfovibrionales</taxon>
        <taxon>Desulfovibrionaceae</taxon>
        <taxon>Nitratidesulfovibrio</taxon>
    </lineage>
</organism>
<comment type="function">
    <text evidence="1">One of the primary rRNA binding proteins, it binds directly to 16S rRNA central domain where it helps coordinate assembly of the platform of the 30S subunit.</text>
</comment>
<comment type="subunit">
    <text evidence="1">Part of the 30S ribosomal subunit. Contacts proteins S5 and S12.</text>
</comment>
<comment type="similarity">
    <text evidence="1">Belongs to the universal ribosomal protein uS8 family.</text>
</comment>
<sequence>MLTDPIADMLTRIRNAHLALHKEVSVPRSKMKESLAAILKQEGYIEDVATEEGSIKLTLKYFKGKPVISGLKRVSKPGRRVYVGMHEIPKVQNGLGICILSTSRGVMDGNSAHESKVGGELLCEIW</sequence>
<name>RS8_NITV4</name>
<feature type="chain" id="PRO_0000290829" description="Small ribosomal subunit protein uS8">
    <location>
        <begin position="1"/>
        <end position="126"/>
    </location>
</feature>
<keyword id="KW-0687">Ribonucleoprotein</keyword>
<keyword id="KW-0689">Ribosomal protein</keyword>
<keyword id="KW-0694">RNA-binding</keyword>
<keyword id="KW-0699">rRNA-binding</keyword>
<reference key="1">
    <citation type="journal article" date="2009" name="Environ. Microbiol.">
        <title>Contribution of mobile genetic elements to Desulfovibrio vulgaris genome plasticity.</title>
        <authorList>
            <person name="Walker C.B."/>
            <person name="Stolyar S."/>
            <person name="Chivian D."/>
            <person name="Pinel N."/>
            <person name="Gabster J.A."/>
            <person name="Dehal P.S."/>
            <person name="He Z."/>
            <person name="Yang Z.K."/>
            <person name="Yen H.C."/>
            <person name="Zhou J."/>
            <person name="Wall J.D."/>
            <person name="Hazen T.C."/>
            <person name="Arkin A.P."/>
            <person name="Stahl D.A."/>
        </authorList>
    </citation>
    <scope>NUCLEOTIDE SEQUENCE [LARGE SCALE GENOMIC DNA]</scope>
    <source>
        <strain>DP4</strain>
    </source>
</reference>
<gene>
    <name evidence="1" type="primary">rpsH</name>
    <name type="ordered locus">Dvul_1751</name>
</gene>
<protein>
    <recommendedName>
        <fullName evidence="1">Small ribosomal subunit protein uS8</fullName>
    </recommendedName>
    <alternativeName>
        <fullName evidence="2">30S ribosomal protein S8</fullName>
    </alternativeName>
</protein>
<evidence type="ECO:0000255" key="1">
    <source>
        <dbReference type="HAMAP-Rule" id="MF_01302"/>
    </source>
</evidence>
<evidence type="ECO:0000305" key="2"/>
<accession>A1VEA2</accession>
<dbReference type="EMBL" id="CP000527">
    <property type="protein sequence ID" value="ABM28768.1"/>
    <property type="molecule type" value="Genomic_DNA"/>
</dbReference>
<dbReference type="RefSeq" id="WP_010938612.1">
    <property type="nucleotide sequence ID" value="NC_008751.1"/>
</dbReference>
<dbReference type="SMR" id="A1VEA2"/>
<dbReference type="KEGG" id="dvl:Dvul_1751"/>
<dbReference type="HOGENOM" id="CLU_098428_0_2_7"/>
<dbReference type="Proteomes" id="UP000009173">
    <property type="component" value="Chromosome"/>
</dbReference>
<dbReference type="GO" id="GO:1990904">
    <property type="term" value="C:ribonucleoprotein complex"/>
    <property type="evidence" value="ECO:0007669"/>
    <property type="project" value="UniProtKB-KW"/>
</dbReference>
<dbReference type="GO" id="GO:0005840">
    <property type="term" value="C:ribosome"/>
    <property type="evidence" value="ECO:0007669"/>
    <property type="project" value="UniProtKB-KW"/>
</dbReference>
<dbReference type="GO" id="GO:0019843">
    <property type="term" value="F:rRNA binding"/>
    <property type="evidence" value="ECO:0007669"/>
    <property type="project" value="UniProtKB-UniRule"/>
</dbReference>
<dbReference type="GO" id="GO:0003735">
    <property type="term" value="F:structural constituent of ribosome"/>
    <property type="evidence" value="ECO:0007669"/>
    <property type="project" value="InterPro"/>
</dbReference>
<dbReference type="GO" id="GO:0006412">
    <property type="term" value="P:translation"/>
    <property type="evidence" value="ECO:0007669"/>
    <property type="project" value="UniProtKB-UniRule"/>
</dbReference>
<dbReference type="FunFam" id="3.30.1370.30:FF:000002">
    <property type="entry name" value="30S ribosomal protein S8"/>
    <property type="match status" value="1"/>
</dbReference>
<dbReference type="FunFam" id="3.30.1490.10:FF:000001">
    <property type="entry name" value="30S ribosomal protein S8"/>
    <property type="match status" value="1"/>
</dbReference>
<dbReference type="Gene3D" id="3.30.1370.30">
    <property type="match status" value="1"/>
</dbReference>
<dbReference type="Gene3D" id="3.30.1490.10">
    <property type="match status" value="1"/>
</dbReference>
<dbReference type="HAMAP" id="MF_01302_B">
    <property type="entry name" value="Ribosomal_uS8_B"/>
    <property type="match status" value="1"/>
</dbReference>
<dbReference type="InterPro" id="IPR000630">
    <property type="entry name" value="Ribosomal_uS8"/>
</dbReference>
<dbReference type="InterPro" id="IPR047863">
    <property type="entry name" value="Ribosomal_uS8_CS"/>
</dbReference>
<dbReference type="InterPro" id="IPR035987">
    <property type="entry name" value="Ribosomal_uS8_sf"/>
</dbReference>
<dbReference type="NCBIfam" id="NF001109">
    <property type="entry name" value="PRK00136.1"/>
    <property type="match status" value="1"/>
</dbReference>
<dbReference type="PANTHER" id="PTHR11758">
    <property type="entry name" value="40S RIBOSOMAL PROTEIN S15A"/>
    <property type="match status" value="1"/>
</dbReference>
<dbReference type="Pfam" id="PF00410">
    <property type="entry name" value="Ribosomal_S8"/>
    <property type="match status" value="1"/>
</dbReference>
<dbReference type="SUPFAM" id="SSF56047">
    <property type="entry name" value="Ribosomal protein S8"/>
    <property type="match status" value="1"/>
</dbReference>
<dbReference type="PROSITE" id="PS00053">
    <property type="entry name" value="RIBOSOMAL_S8"/>
    <property type="match status" value="1"/>
</dbReference>